<sequence length="292" mass="33482">MTEFDLSTREGRWKHFGSVDPIEGTKPTTKNEMTDLQSTHKDFLFEIEEVGIKNLVYPVLVDQYQTAGTFSFSTSLTKDEKGINMSRIIESVEKHYDNGIELEFNTLYQVLRTLQTNMKQNAAGVDVSGKWFFDRYSPTTNIKAVGNADVTYGLAIDGDKVTRKELTIEATVTTLCPCSKEISEYSAHNQRGVVTVKTYINKDQDIVDDYKNKILDAMEANASSILYPILKRPDEKRVTERAYENPRFVEDLIRLIAADLVEFDWLDGFDIECRNEESIHQHDAFAKLKYRK</sequence>
<feature type="chain" id="PRO_0000289523" description="GTP cyclohydrolase FolE2">
    <location>
        <begin position="1"/>
        <end position="292"/>
    </location>
</feature>
<feature type="site" description="May be catalytically important" evidence="1">
    <location>
        <position position="176"/>
    </location>
</feature>
<protein>
    <recommendedName>
        <fullName evidence="1">GTP cyclohydrolase FolE2</fullName>
        <ecNumber evidence="1">3.5.4.16</ecNumber>
    </recommendedName>
</protein>
<reference key="1">
    <citation type="book" date="2006" name="Gram positive pathogens, 2nd edition">
        <title>The Staphylococcus aureus NCTC 8325 genome.</title>
        <editorList>
            <person name="Fischetti V."/>
            <person name="Novick R."/>
            <person name="Ferretti J."/>
            <person name="Portnoy D."/>
            <person name="Rood J."/>
        </editorList>
        <authorList>
            <person name="Gillaspy A.F."/>
            <person name="Worrell V."/>
            <person name="Orvis J."/>
            <person name="Roe B.A."/>
            <person name="Dyer D.W."/>
            <person name="Iandolo J.J."/>
        </authorList>
    </citation>
    <scope>NUCLEOTIDE SEQUENCE [LARGE SCALE GENOMIC DNA]</scope>
    <source>
        <strain>NCTC 8325 / PS 47</strain>
    </source>
</reference>
<gene>
    <name evidence="1" type="primary">folE2</name>
    <name type="ordered locus">SAOUHSC_00549</name>
</gene>
<keyword id="KW-0378">Hydrolase</keyword>
<keyword id="KW-1185">Reference proteome</keyword>
<name>GCH4_STAA8</name>
<evidence type="ECO:0000255" key="1">
    <source>
        <dbReference type="HAMAP-Rule" id="MF_01527"/>
    </source>
</evidence>
<dbReference type="EC" id="3.5.4.16" evidence="1"/>
<dbReference type="EMBL" id="CP000253">
    <property type="protein sequence ID" value="ABD29696.1"/>
    <property type="molecule type" value="Genomic_DNA"/>
</dbReference>
<dbReference type="RefSeq" id="WP_000134232.1">
    <property type="nucleotide sequence ID" value="NZ_LS483365.1"/>
</dbReference>
<dbReference type="RefSeq" id="YP_499121.1">
    <property type="nucleotide sequence ID" value="NC_007795.1"/>
</dbReference>
<dbReference type="SMR" id="Q2G0L1"/>
<dbReference type="STRING" id="93061.SAOUHSC_00549"/>
<dbReference type="PaxDb" id="1280-SAXN108_0623"/>
<dbReference type="GeneID" id="3920828"/>
<dbReference type="KEGG" id="sao:SAOUHSC_00549"/>
<dbReference type="PATRIC" id="fig|93061.5.peg.494"/>
<dbReference type="eggNOG" id="COG1469">
    <property type="taxonomic scope" value="Bacteria"/>
</dbReference>
<dbReference type="HOGENOM" id="CLU_062816_1_1_9"/>
<dbReference type="OrthoDB" id="9774824at2"/>
<dbReference type="UniPathway" id="UPA00848">
    <property type="reaction ID" value="UER00151"/>
</dbReference>
<dbReference type="PRO" id="PR:Q2G0L1"/>
<dbReference type="Proteomes" id="UP000008816">
    <property type="component" value="Chromosome"/>
</dbReference>
<dbReference type="GO" id="GO:0003933">
    <property type="term" value="F:GTP cyclohydrolase activity"/>
    <property type="evidence" value="ECO:0000318"/>
    <property type="project" value="GO_Central"/>
</dbReference>
<dbReference type="GO" id="GO:0003934">
    <property type="term" value="F:GTP cyclohydrolase I activity"/>
    <property type="evidence" value="ECO:0007669"/>
    <property type="project" value="UniProtKB-UniRule"/>
</dbReference>
<dbReference type="GO" id="GO:0046654">
    <property type="term" value="P:tetrahydrofolate biosynthetic process"/>
    <property type="evidence" value="ECO:0007669"/>
    <property type="project" value="UniProtKB-UniRule"/>
</dbReference>
<dbReference type="Gene3D" id="3.10.270.10">
    <property type="entry name" value="Urate Oxidase"/>
    <property type="match status" value="1"/>
</dbReference>
<dbReference type="HAMAP" id="MF_01527_B">
    <property type="entry name" value="GTP_cyclohydrol_B"/>
    <property type="match status" value="1"/>
</dbReference>
<dbReference type="InterPro" id="IPR022838">
    <property type="entry name" value="GTP_cyclohydrolase_FolE2"/>
</dbReference>
<dbReference type="InterPro" id="IPR003801">
    <property type="entry name" value="GTP_cyclohydrolase_FolE2/MptA"/>
</dbReference>
<dbReference type="NCBIfam" id="NF010200">
    <property type="entry name" value="PRK13674.1-1"/>
    <property type="match status" value="1"/>
</dbReference>
<dbReference type="PANTHER" id="PTHR36445">
    <property type="entry name" value="GTP CYCLOHYDROLASE MPTA"/>
    <property type="match status" value="1"/>
</dbReference>
<dbReference type="PANTHER" id="PTHR36445:SF1">
    <property type="entry name" value="GTP CYCLOHYDROLASE MPTA"/>
    <property type="match status" value="1"/>
</dbReference>
<dbReference type="Pfam" id="PF02649">
    <property type="entry name" value="GCHY-1"/>
    <property type="match status" value="1"/>
</dbReference>
<organism>
    <name type="scientific">Staphylococcus aureus (strain NCTC 8325 / PS 47)</name>
    <dbReference type="NCBI Taxonomy" id="93061"/>
    <lineage>
        <taxon>Bacteria</taxon>
        <taxon>Bacillati</taxon>
        <taxon>Bacillota</taxon>
        <taxon>Bacilli</taxon>
        <taxon>Bacillales</taxon>
        <taxon>Staphylococcaceae</taxon>
        <taxon>Staphylococcus</taxon>
    </lineage>
</organism>
<accession>Q2G0L1</accession>
<proteinExistence type="inferred from homology"/>
<comment type="function">
    <text evidence="1">Converts GTP to 7,8-dihydroneopterin triphosphate.</text>
</comment>
<comment type="catalytic activity">
    <reaction evidence="1">
        <text>GTP + H2O = 7,8-dihydroneopterin 3'-triphosphate + formate + H(+)</text>
        <dbReference type="Rhea" id="RHEA:17473"/>
        <dbReference type="ChEBI" id="CHEBI:15377"/>
        <dbReference type="ChEBI" id="CHEBI:15378"/>
        <dbReference type="ChEBI" id="CHEBI:15740"/>
        <dbReference type="ChEBI" id="CHEBI:37565"/>
        <dbReference type="ChEBI" id="CHEBI:58462"/>
        <dbReference type="EC" id="3.5.4.16"/>
    </reaction>
</comment>
<comment type="pathway">
    <text evidence="1">Cofactor biosynthesis; 7,8-dihydroneopterin triphosphate biosynthesis; 7,8-dihydroneopterin triphosphate from GTP: step 1/1.</text>
</comment>
<comment type="similarity">
    <text evidence="1">Belongs to the GTP cyclohydrolase IV family.</text>
</comment>